<feature type="chain" id="PRO_5000247197" description="Putative antiporter subunit mnhA2">
    <location>
        <begin position="1"/>
        <end position="800"/>
    </location>
</feature>
<feature type="transmembrane region" description="Helical" evidence="2">
    <location>
        <begin position="1"/>
        <end position="21"/>
    </location>
</feature>
<feature type="transmembrane region" description="Helical" evidence="2">
    <location>
        <begin position="33"/>
        <end position="53"/>
    </location>
</feature>
<feature type="transmembrane region" description="Helical" evidence="2">
    <location>
        <begin position="78"/>
        <end position="98"/>
    </location>
</feature>
<feature type="transmembrane region" description="Helical" evidence="2">
    <location>
        <begin position="118"/>
        <end position="138"/>
    </location>
</feature>
<feature type="transmembrane region" description="Helical" evidence="2">
    <location>
        <begin position="167"/>
        <end position="187"/>
    </location>
</feature>
<feature type="transmembrane region" description="Helical" evidence="2">
    <location>
        <begin position="207"/>
        <end position="227"/>
    </location>
</feature>
<feature type="transmembrane region" description="Helical" evidence="2">
    <location>
        <begin position="241"/>
        <end position="261"/>
    </location>
</feature>
<feature type="transmembrane region" description="Helical" evidence="2">
    <location>
        <begin position="273"/>
        <end position="293"/>
    </location>
</feature>
<feature type="transmembrane region" description="Helical" evidence="2">
    <location>
        <begin position="300"/>
        <end position="320"/>
    </location>
</feature>
<feature type="transmembrane region" description="Helical" evidence="2">
    <location>
        <begin position="331"/>
        <end position="351"/>
    </location>
</feature>
<feature type="transmembrane region" description="Helical" evidence="2">
    <location>
        <begin position="387"/>
        <end position="407"/>
    </location>
</feature>
<feature type="transmembrane region" description="Helical" evidence="2">
    <location>
        <begin position="424"/>
        <end position="444"/>
    </location>
</feature>
<feature type="transmembrane region" description="Helical" evidence="2">
    <location>
        <begin position="472"/>
        <end position="492"/>
    </location>
</feature>
<feature type="transmembrane region" description="Helical" evidence="2">
    <location>
        <begin position="527"/>
        <end position="547"/>
    </location>
</feature>
<feature type="transmembrane region" description="Helical" evidence="2">
    <location>
        <begin position="595"/>
        <end position="615"/>
    </location>
</feature>
<feature type="transmembrane region" description="Helical" evidence="2">
    <location>
        <begin position="627"/>
        <end position="647"/>
    </location>
</feature>
<feature type="transmembrane region" description="Helical" evidence="2">
    <location>
        <begin position="651"/>
        <end position="671"/>
    </location>
</feature>
<feature type="transmembrane region" description="Helical" evidence="2">
    <location>
        <begin position="676"/>
        <end position="696"/>
    </location>
</feature>
<feature type="transmembrane region" description="Helical" evidence="2">
    <location>
        <begin position="712"/>
        <end position="732"/>
    </location>
</feature>
<feature type="transmembrane region" description="Helical" evidence="2">
    <location>
        <begin position="768"/>
        <end position="788"/>
    </location>
</feature>
<sequence length="800" mass="89610">MSLVYLLIAILVIMAMILLMSKRRALAKYAGYIALVAPVISSIYFLIQIPSVAKLQYLSTSIPWIKTLDINLDLRLDGLSLMFSLIISLIGIAVFFYATQYLSSRKDNLPRFYFYLTLFMFSMIGIVLSDNTILMYIFWELTSVSSFLLISYWYNNGDSQFGAIQSFMITVFGGLALLVGFIMLYIMTGTNNITDILGQADHIKNHGLFIPMIFMFLLGAFTKSAQFPFHIWLPRAMAAPTPVSAYLHSATMVKAGIFLLLRFTPLLGLSNMYIYIVTFVGLITMLFGSITALKQWDLKGILAYSTISQLGMIMAMVGIGGGYAQHQQDAIASIYVFVLFGALFHLMNHAIFKCALFMGVGILDHEAGSRDIRILSGMRQLFPKMNLVMTIAALSMAGVPFLNGFLSKEMFLDALTQTGQLSQFSLISMIAIVFVGVIASIFTFTYALYMVKEVFWTKYDSKVFTKKNIHEPWLFSLPSLILMVLVPVIFFVPNIFGKGIIVPALRGVSGGNHQIDPLAPHVSQWHGFNIPLLLTIIIILLGSVLAIKVDWKKVFTGKIRQISVSKGYEMVYRHFEKFATKRFKRVMQDRLNQYIIMTLGIFMIIIGYGYIRIGLPKVHQLHVSEFGALEIILAIVTVTIGISLIFIRQRLTMVILNGVIGFVVTLFFIAMKAPDLALTQLVVETITTILFIVSFSRLPNVPRSNANKKREIIKISVSLLMALIVVSLIFITQQTDGLSSISDFYLKADKLTGGKNIVNAILGDFRALDTLFEGLVLIITGLGIYTLLNYQDRRGQDERE</sequence>
<gene>
    <name type="primary">mnhA2</name>
    <name type="synonym">mrpA2</name>
    <name type="ordered locus">SaurJH9_0645</name>
</gene>
<protein>
    <recommendedName>
        <fullName>Putative antiporter subunit mnhA2</fullName>
    </recommendedName>
    <alternativeName>
        <fullName>Mrp complex subunit A2</fullName>
    </alternativeName>
    <alternativeName>
        <fullName>Putative NADH-ubiquinone oxidoreductase subunit mnhA2</fullName>
    </alternativeName>
</protein>
<dbReference type="EMBL" id="CP000703">
    <property type="protein sequence ID" value="ABQ48448.1"/>
    <property type="molecule type" value="Genomic_DNA"/>
</dbReference>
<dbReference type="RefSeq" id="WP_000060771.1">
    <property type="nucleotide sequence ID" value="NC_009487.1"/>
</dbReference>
<dbReference type="SMR" id="A5IQH5"/>
<dbReference type="KEGG" id="saj:SaurJH9_0645"/>
<dbReference type="HOGENOM" id="CLU_007100_2_1_9"/>
<dbReference type="GO" id="GO:0005886">
    <property type="term" value="C:plasma membrane"/>
    <property type="evidence" value="ECO:0007669"/>
    <property type="project" value="UniProtKB-SubCell"/>
</dbReference>
<dbReference type="GO" id="GO:0015297">
    <property type="term" value="F:antiporter activity"/>
    <property type="evidence" value="ECO:0007669"/>
    <property type="project" value="UniProtKB-KW"/>
</dbReference>
<dbReference type="GO" id="GO:0006811">
    <property type="term" value="P:monoatomic ion transport"/>
    <property type="evidence" value="ECO:0007669"/>
    <property type="project" value="UniProtKB-KW"/>
</dbReference>
<dbReference type="InterPro" id="IPR050616">
    <property type="entry name" value="CPA3_Na-H_Antiporter_A"/>
</dbReference>
<dbReference type="InterPro" id="IPR025383">
    <property type="entry name" value="MrpA_C/MbhD"/>
</dbReference>
<dbReference type="InterPro" id="IPR046806">
    <property type="entry name" value="MrpA_C/MbhE"/>
</dbReference>
<dbReference type="InterPro" id="IPR001750">
    <property type="entry name" value="ND/Mrp_TM"/>
</dbReference>
<dbReference type="InterPro" id="IPR001516">
    <property type="entry name" value="Proton_antipo_N"/>
</dbReference>
<dbReference type="NCBIfam" id="NF009286">
    <property type="entry name" value="PRK12646.1"/>
    <property type="match status" value="1"/>
</dbReference>
<dbReference type="PANTHER" id="PTHR43373">
    <property type="entry name" value="NA(+)/H(+) ANTIPORTER SUBUNIT"/>
    <property type="match status" value="1"/>
</dbReference>
<dbReference type="PANTHER" id="PTHR43373:SF1">
    <property type="entry name" value="NA(+)_H(+) ANTIPORTER SUBUNIT A"/>
    <property type="match status" value="1"/>
</dbReference>
<dbReference type="Pfam" id="PF13244">
    <property type="entry name" value="MbhD"/>
    <property type="match status" value="1"/>
</dbReference>
<dbReference type="Pfam" id="PF20501">
    <property type="entry name" value="MbhE"/>
    <property type="match status" value="1"/>
</dbReference>
<dbReference type="Pfam" id="PF00361">
    <property type="entry name" value="Proton_antipo_M"/>
    <property type="match status" value="1"/>
</dbReference>
<dbReference type="Pfam" id="PF00662">
    <property type="entry name" value="Proton_antipo_N"/>
    <property type="match status" value="1"/>
</dbReference>
<dbReference type="PRINTS" id="PR01434">
    <property type="entry name" value="NADHDHGNASE5"/>
</dbReference>
<reference key="1">
    <citation type="submission" date="2007-05" db="EMBL/GenBank/DDBJ databases">
        <title>Complete sequence of chromosome of Staphylococcus aureus subsp. aureus JH9.</title>
        <authorList>
            <consortium name="US DOE Joint Genome Institute"/>
            <person name="Copeland A."/>
            <person name="Lucas S."/>
            <person name="Lapidus A."/>
            <person name="Barry K."/>
            <person name="Detter J.C."/>
            <person name="Glavina del Rio T."/>
            <person name="Hammon N."/>
            <person name="Israni S."/>
            <person name="Pitluck S."/>
            <person name="Chain P."/>
            <person name="Malfatti S."/>
            <person name="Shin M."/>
            <person name="Vergez L."/>
            <person name="Schmutz J."/>
            <person name="Larimer F."/>
            <person name="Land M."/>
            <person name="Hauser L."/>
            <person name="Kyrpides N."/>
            <person name="Kim E."/>
            <person name="Tomasz A."/>
            <person name="Richardson P."/>
        </authorList>
    </citation>
    <scope>NUCLEOTIDE SEQUENCE [LARGE SCALE GENOMIC DNA]</scope>
    <source>
        <strain>JH9</strain>
    </source>
</reference>
<name>MNHA2_STAA9</name>
<keyword id="KW-0050">Antiport</keyword>
<keyword id="KW-1003">Cell membrane</keyword>
<keyword id="KW-0406">Ion transport</keyword>
<keyword id="KW-0472">Membrane</keyword>
<keyword id="KW-0812">Transmembrane</keyword>
<keyword id="KW-1133">Transmembrane helix</keyword>
<keyword id="KW-0813">Transport</keyword>
<proteinExistence type="inferred from homology"/>
<accession>A5IQH5</accession>
<comment type="subunit">
    <text evidence="1">May form a heterooligomeric complex that consists of seven subunits: mnhA2, mnhB2, mnhC2, mnhD2, mnhE2, mnhF2 and mnhG2.</text>
</comment>
<comment type="subcellular location">
    <subcellularLocation>
        <location evidence="3">Cell membrane</location>
        <topology evidence="3">Multi-pass membrane protein</topology>
    </subcellularLocation>
</comment>
<comment type="similarity">
    <text evidence="3">Belongs to the CPA3 antiporters (TC 2.A.63) subunit A family.</text>
</comment>
<organism>
    <name type="scientific">Staphylococcus aureus (strain JH9)</name>
    <dbReference type="NCBI Taxonomy" id="359786"/>
    <lineage>
        <taxon>Bacteria</taxon>
        <taxon>Bacillati</taxon>
        <taxon>Bacillota</taxon>
        <taxon>Bacilli</taxon>
        <taxon>Bacillales</taxon>
        <taxon>Staphylococcaceae</taxon>
        <taxon>Staphylococcus</taxon>
    </lineage>
</organism>
<evidence type="ECO:0000250" key="1"/>
<evidence type="ECO:0000255" key="2"/>
<evidence type="ECO:0000305" key="3"/>